<dbReference type="EC" id="7.1.1.9"/>
<dbReference type="EMBL" id="AP008226">
    <property type="protein sequence ID" value="BAD70956.1"/>
    <property type="molecule type" value="Genomic_DNA"/>
</dbReference>
<dbReference type="RefSeq" id="WP_008632613.1">
    <property type="nucleotide sequence ID" value="NC_006461.1"/>
</dbReference>
<dbReference type="RefSeq" id="YP_144399.1">
    <property type="nucleotide sequence ID" value="NC_006461.1"/>
</dbReference>
<dbReference type="PDB" id="1EHK">
    <property type="method" value="X-ray"/>
    <property type="resolution" value="2.40 A"/>
    <property type="chains" value="C=2-34"/>
</dbReference>
<dbReference type="PDB" id="1XME">
    <property type="method" value="X-ray"/>
    <property type="resolution" value="2.30 A"/>
    <property type="chains" value="C=1-34"/>
</dbReference>
<dbReference type="PDB" id="2QPD">
    <property type="method" value="X-ray"/>
    <property type="resolution" value="3.25 A"/>
    <property type="chains" value="C=1-34"/>
</dbReference>
<dbReference type="PDB" id="2QPE">
    <property type="method" value="X-ray"/>
    <property type="resolution" value="2.90 A"/>
    <property type="chains" value="C=1-34"/>
</dbReference>
<dbReference type="PDB" id="3BVD">
    <property type="method" value="X-ray"/>
    <property type="resolution" value="3.37 A"/>
    <property type="chains" value="C=1-34"/>
</dbReference>
<dbReference type="PDB" id="3EH3">
    <property type="method" value="X-ray"/>
    <property type="resolution" value="3.10 A"/>
    <property type="chains" value="C=2-34"/>
</dbReference>
<dbReference type="PDB" id="3EH4">
    <property type="method" value="X-ray"/>
    <property type="resolution" value="2.90 A"/>
    <property type="chains" value="C=2-34"/>
</dbReference>
<dbReference type="PDB" id="3EH5">
    <property type="method" value="X-ray"/>
    <property type="resolution" value="2.80 A"/>
    <property type="chains" value="C=2-34"/>
</dbReference>
<dbReference type="PDB" id="3QJQ">
    <property type="method" value="X-ray"/>
    <property type="resolution" value="2.90 A"/>
    <property type="chains" value="C=1-34"/>
</dbReference>
<dbReference type="PDB" id="3QJR">
    <property type="method" value="X-ray"/>
    <property type="resolution" value="3.20 A"/>
    <property type="chains" value="C=1-34"/>
</dbReference>
<dbReference type="PDB" id="3QJS">
    <property type="method" value="X-ray"/>
    <property type="resolution" value="2.80 A"/>
    <property type="chains" value="C=1-34"/>
</dbReference>
<dbReference type="PDB" id="3QJT">
    <property type="method" value="X-ray"/>
    <property type="resolution" value="2.95 A"/>
    <property type="chains" value="C=1-34"/>
</dbReference>
<dbReference type="PDB" id="3QJU">
    <property type="method" value="X-ray"/>
    <property type="resolution" value="2.90 A"/>
    <property type="chains" value="C=1-34"/>
</dbReference>
<dbReference type="PDB" id="3QJV">
    <property type="method" value="X-ray"/>
    <property type="resolution" value="2.80 A"/>
    <property type="chains" value="C=1-34"/>
</dbReference>
<dbReference type="PDB" id="3S33">
    <property type="method" value="X-ray"/>
    <property type="resolution" value="4.45 A"/>
    <property type="chains" value="C=2-34"/>
</dbReference>
<dbReference type="PDB" id="3S38">
    <property type="method" value="X-ray"/>
    <property type="resolution" value="4.20 A"/>
    <property type="chains" value="C=2-34"/>
</dbReference>
<dbReference type="PDB" id="3S39">
    <property type="method" value="X-ray"/>
    <property type="resolution" value="4.80 A"/>
    <property type="chains" value="C=2-34"/>
</dbReference>
<dbReference type="PDB" id="3S3A">
    <property type="method" value="X-ray"/>
    <property type="resolution" value="4.25 A"/>
    <property type="chains" value="C=2-34"/>
</dbReference>
<dbReference type="PDB" id="3S3B">
    <property type="method" value="X-ray"/>
    <property type="resolution" value="3.30 A"/>
    <property type="chains" value="C=2-34"/>
</dbReference>
<dbReference type="PDB" id="3S3C">
    <property type="method" value="X-ray"/>
    <property type="resolution" value="4.00 A"/>
    <property type="chains" value="C=2-34"/>
</dbReference>
<dbReference type="PDB" id="3S3D">
    <property type="method" value="X-ray"/>
    <property type="resolution" value="3.75 A"/>
    <property type="chains" value="C=2-34"/>
</dbReference>
<dbReference type="PDB" id="3S8F">
    <property type="method" value="X-ray"/>
    <property type="resolution" value="1.80 A"/>
    <property type="chains" value="C=1-34"/>
</dbReference>
<dbReference type="PDB" id="3S8G">
    <property type="method" value="X-ray"/>
    <property type="resolution" value="1.80 A"/>
    <property type="chains" value="C=1-34"/>
</dbReference>
<dbReference type="PDB" id="4FA7">
    <property type="method" value="X-ray"/>
    <property type="resolution" value="2.50 A"/>
    <property type="chains" value="C=1-34"/>
</dbReference>
<dbReference type="PDB" id="4FAA">
    <property type="method" value="X-ray"/>
    <property type="resolution" value="2.80 A"/>
    <property type="chains" value="C=1-34"/>
</dbReference>
<dbReference type="PDB" id="4G70">
    <property type="method" value="X-ray"/>
    <property type="resolution" value="2.60 A"/>
    <property type="chains" value="C=1-34"/>
</dbReference>
<dbReference type="PDB" id="4G71">
    <property type="method" value="X-ray"/>
    <property type="resolution" value="2.90 A"/>
    <property type="chains" value="C=1-34"/>
</dbReference>
<dbReference type="PDB" id="4G72">
    <property type="method" value="X-ray"/>
    <property type="resolution" value="3.19 A"/>
    <property type="chains" value="C=1-34"/>
</dbReference>
<dbReference type="PDB" id="4G7Q">
    <property type="method" value="X-ray"/>
    <property type="resolution" value="2.60 A"/>
    <property type="chains" value="C=1-34"/>
</dbReference>
<dbReference type="PDB" id="4G7R">
    <property type="method" value="X-ray"/>
    <property type="resolution" value="3.05 A"/>
    <property type="chains" value="C=1-34"/>
</dbReference>
<dbReference type="PDB" id="4G7S">
    <property type="method" value="X-ray"/>
    <property type="resolution" value="2.00 A"/>
    <property type="chains" value="C=1-34"/>
</dbReference>
<dbReference type="PDB" id="4GP4">
    <property type="method" value="X-ray"/>
    <property type="resolution" value="2.80 A"/>
    <property type="chains" value="C=1-34"/>
</dbReference>
<dbReference type="PDB" id="4GP5">
    <property type="method" value="X-ray"/>
    <property type="resolution" value="2.70 A"/>
    <property type="chains" value="C=1-34"/>
</dbReference>
<dbReference type="PDB" id="4GP8">
    <property type="method" value="X-ray"/>
    <property type="resolution" value="2.80 A"/>
    <property type="chains" value="C=1-34"/>
</dbReference>
<dbReference type="PDB" id="4N4Y">
    <property type="method" value="X-ray"/>
    <property type="resolution" value="2.90 A"/>
    <property type="chains" value="C=1-34"/>
</dbReference>
<dbReference type="PDB" id="5NDC">
    <property type="method" value="X-ray"/>
    <property type="resolution" value="2.30 A"/>
    <property type="chains" value="C=1-34"/>
</dbReference>
<dbReference type="PDB" id="8AJZ">
    <property type="method" value="X-ray"/>
    <property type="resolution" value="2.00 A"/>
    <property type="chains" value="C=1-34"/>
</dbReference>
<dbReference type="PDB" id="8HUA">
    <property type="method" value="X-ray"/>
    <property type="resolution" value="2.12 A"/>
    <property type="chains" value="C=1-34"/>
</dbReference>
<dbReference type="PDB" id="8K65">
    <property type="method" value="X-ray"/>
    <property type="resolution" value="2.00 A"/>
    <property type="chains" value="C=1-34"/>
</dbReference>
<dbReference type="PDB" id="8K6Y">
    <property type="method" value="X-ray"/>
    <property type="resolution" value="2.00 A"/>
    <property type="chains" value="C=1-34"/>
</dbReference>
<dbReference type="PDBsum" id="1EHK"/>
<dbReference type="PDBsum" id="1XME"/>
<dbReference type="PDBsum" id="2QPD"/>
<dbReference type="PDBsum" id="2QPE"/>
<dbReference type="PDBsum" id="3BVD"/>
<dbReference type="PDBsum" id="3EH3"/>
<dbReference type="PDBsum" id="3EH4"/>
<dbReference type="PDBsum" id="3EH5"/>
<dbReference type="PDBsum" id="3QJQ"/>
<dbReference type="PDBsum" id="3QJR"/>
<dbReference type="PDBsum" id="3QJS"/>
<dbReference type="PDBsum" id="3QJT"/>
<dbReference type="PDBsum" id="3QJU"/>
<dbReference type="PDBsum" id="3QJV"/>
<dbReference type="PDBsum" id="3S33"/>
<dbReference type="PDBsum" id="3S38"/>
<dbReference type="PDBsum" id="3S39"/>
<dbReference type="PDBsum" id="3S3A"/>
<dbReference type="PDBsum" id="3S3B"/>
<dbReference type="PDBsum" id="3S3C"/>
<dbReference type="PDBsum" id="3S3D"/>
<dbReference type="PDBsum" id="3S8F"/>
<dbReference type="PDBsum" id="3S8G"/>
<dbReference type="PDBsum" id="4FA7"/>
<dbReference type="PDBsum" id="4FAA"/>
<dbReference type="PDBsum" id="4G70"/>
<dbReference type="PDBsum" id="4G71"/>
<dbReference type="PDBsum" id="4G72"/>
<dbReference type="PDBsum" id="4G7Q"/>
<dbReference type="PDBsum" id="4G7R"/>
<dbReference type="PDBsum" id="4G7S"/>
<dbReference type="PDBsum" id="4GP4"/>
<dbReference type="PDBsum" id="4GP5"/>
<dbReference type="PDBsum" id="4GP8"/>
<dbReference type="PDBsum" id="4N4Y"/>
<dbReference type="PDBsum" id="5NDC"/>
<dbReference type="PDBsum" id="8AJZ"/>
<dbReference type="PDBsum" id="8HUA"/>
<dbReference type="PDBsum" id="8K65"/>
<dbReference type="PDBsum" id="8K6Y"/>
<dbReference type="SMR" id="P82543"/>
<dbReference type="IntAct" id="P82543">
    <property type="interactions" value="1"/>
</dbReference>
<dbReference type="DrugBank" id="DB02451">
    <property type="generic name" value="B-nonylglucoside"/>
</dbReference>
<dbReference type="TCDB" id="3.D.4.2.1">
    <property type="family name" value="the proton-translocating cytochrome oxidase (cox) superfamily"/>
</dbReference>
<dbReference type="EnsemblBacteria" id="BAD70956">
    <property type="protein sequence ID" value="BAD70956"/>
    <property type="gene ID" value="BAD70956"/>
</dbReference>
<dbReference type="GeneID" id="3168186"/>
<dbReference type="KEGG" id="ttj:TTHA1133"/>
<dbReference type="PATRIC" id="fig|300852.9.peg.1112"/>
<dbReference type="eggNOG" id="ENOG5032GEU">
    <property type="taxonomic scope" value="Bacteria"/>
</dbReference>
<dbReference type="HOGENOM" id="CLU_220268_1_0_0"/>
<dbReference type="EvolutionaryTrace" id="P82543"/>
<dbReference type="Proteomes" id="UP000000532">
    <property type="component" value="Chromosome"/>
</dbReference>
<dbReference type="GO" id="GO:0005886">
    <property type="term" value="C:plasma membrane"/>
    <property type="evidence" value="ECO:0007669"/>
    <property type="project" value="UniProtKB-SubCell"/>
</dbReference>
<dbReference type="GO" id="GO:0004129">
    <property type="term" value="F:cytochrome-c oxidase activity"/>
    <property type="evidence" value="ECO:0007669"/>
    <property type="project" value="UniProtKB-EC"/>
</dbReference>
<dbReference type="InterPro" id="IPR012538">
    <property type="entry name" value="Cyt_c_oxidase_su2a"/>
</dbReference>
<dbReference type="InterPro" id="IPR036246">
    <property type="entry name" value="Cyt_c_oxidase_su2a_ba3"/>
</dbReference>
<dbReference type="Pfam" id="PF08113">
    <property type="entry name" value="CoxIIa"/>
    <property type="match status" value="1"/>
</dbReference>
<dbReference type="SUPFAM" id="SSF81473">
    <property type="entry name" value="Bacterial ba3 type cytochrome c oxidase subunit IIa"/>
    <property type="match status" value="1"/>
</dbReference>
<comment type="catalytic activity">
    <reaction>
        <text>4 Fe(II)-[cytochrome c] + O2 + 8 H(+)(in) = 4 Fe(III)-[cytochrome c] + 2 H2O + 4 H(+)(out)</text>
        <dbReference type="Rhea" id="RHEA:11436"/>
        <dbReference type="Rhea" id="RHEA-COMP:10350"/>
        <dbReference type="Rhea" id="RHEA-COMP:14399"/>
        <dbReference type="ChEBI" id="CHEBI:15377"/>
        <dbReference type="ChEBI" id="CHEBI:15378"/>
        <dbReference type="ChEBI" id="CHEBI:15379"/>
        <dbReference type="ChEBI" id="CHEBI:29033"/>
        <dbReference type="ChEBI" id="CHEBI:29034"/>
        <dbReference type="EC" id="7.1.1.9"/>
    </reaction>
</comment>
<comment type="subcellular location">
    <subcellularLocation>
        <location>Cell membrane</location>
        <topology>Single-pass membrane protein</topology>
    </subcellularLocation>
</comment>
<comment type="mass spectrometry"/>
<protein>
    <recommendedName>
        <fullName>Cytochrome c oxidase polypeptide 2A</fullName>
        <ecNumber>7.1.1.9</ecNumber>
    </recommendedName>
    <alternativeName>
        <fullName>Cytochrome c ba(3) subunit IIA</fullName>
    </alternativeName>
    <alternativeName>
        <fullName>Cytochrome c oxidase polypeptide IIA</fullName>
    </alternativeName>
    <alternativeName>
        <fullName>Cytochrome cba3 subunit 2A</fullName>
    </alternativeName>
</protein>
<accession>P82543</accession>
<accession>Q5SJ81</accession>
<gene>
    <name type="primary">cbaD</name>
    <name type="ordered locus">TTHA1133</name>
</gene>
<feature type="chain" id="PRO_0000183934" description="Cytochrome c oxidase polypeptide 2A">
    <location>
        <begin position="1"/>
        <end position="34"/>
    </location>
</feature>
<feature type="transmembrane region" description="Helical">
    <location>
        <begin position="4"/>
        <end position="34"/>
    </location>
</feature>
<feature type="modified residue" description="N-formylmethionine" evidence="1">
    <location>
        <position position="1"/>
    </location>
</feature>
<feature type="helix" evidence="2">
    <location>
        <begin position="6"/>
        <end position="32"/>
    </location>
</feature>
<name>COXA_THET8</name>
<organism>
    <name type="scientific">Thermus thermophilus (strain ATCC 27634 / DSM 579 / HB8)</name>
    <dbReference type="NCBI Taxonomy" id="300852"/>
    <lineage>
        <taxon>Bacteria</taxon>
        <taxon>Thermotogati</taxon>
        <taxon>Deinococcota</taxon>
        <taxon>Deinococci</taxon>
        <taxon>Thermales</taxon>
        <taxon>Thermaceae</taxon>
        <taxon>Thermus</taxon>
    </lineage>
</organism>
<reference key="1">
    <citation type="journal article" date="2000" name="Protein Sci.">
        <title>Primary structure of a novel subunit in ba3-cytochrome oxidase from Thermus thermophilus.</title>
        <authorList>
            <person name="Soulimane T."/>
            <person name="Than M.E."/>
            <person name="Dewor M."/>
            <person name="Huber R."/>
            <person name="Buse G."/>
        </authorList>
    </citation>
    <scope>PROTEIN SEQUENCE</scope>
    <scope>FORMYLATION AT MET-1</scope>
    <scope>MASS SPECTROMETRY</scope>
</reference>
<reference key="2">
    <citation type="submission" date="2004-11" db="EMBL/GenBank/DDBJ databases">
        <title>Complete genome sequence of Thermus thermophilus HB8.</title>
        <authorList>
            <person name="Masui R."/>
            <person name="Kurokawa K."/>
            <person name="Nakagawa N."/>
            <person name="Tokunaga F."/>
            <person name="Koyama Y."/>
            <person name="Shibata T."/>
            <person name="Oshima T."/>
            <person name="Yokoyama S."/>
            <person name="Yasunaga T."/>
            <person name="Kuramitsu S."/>
        </authorList>
    </citation>
    <scope>NUCLEOTIDE SEQUENCE [LARGE SCALE GENOMIC DNA]</scope>
    <source>
        <strain>ATCC 27634 / DSM 579 / HB8</strain>
    </source>
</reference>
<reference key="3">
    <citation type="journal article" date="2000" name="EMBO J.">
        <title>Structure and mechanism of the aberrant ba3-cytochrome c oxidase from Thermus thermophilus.</title>
        <authorList>
            <person name="Soulimane T."/>
            <person name="Buse G."/>
            <person name="Bourenkov G.P."/>
            <person name="Bartunik H.D."/>
            <person name="Huber R."/>
            <person name="Than M.E."/>
        </authorList>
    </citation>
    <scope>X-RAY CRYSTALLOGRAPHY (2.4 ANGSTROMS)</scope>
</reference>
<sequence>MEEKPKGALAVILVLTLTILVFWLGVYAVFFARG</sequence>
<proteinExistence type="evidence at protein level"/>
<evidence type="ECO:0000269" key="1">
    <source>
    </source>
</evidence>
<evidence type="ECO:0007829" key="2">
    <source>
        <dbReference type="PDB" id="3S8F"/>
    </source>
</evidence>
<keyword id="KW-0002">3D-structure</keyword>
<keyword id="KW-1003">Cell membrane</keyword>
<keyword id="KW-0903">Direct protein sequencing</keyword>
<keyword id="KW-0249">Electron transport</keyword>
<keyword id="KW-0291">Formylation</keyword>
<keyword id="KW-0375">Hydrogen ion transport</keyword>
<keyword id="KW-0406">Ion transport</keyword>
<keyword id="KW-0472">Membrane</keyword>
<keyword id="KW-1185">Reference proteome</keyword>
<keyword id="KW-0679">Respiratory chain</keyword>
<keyword id="KW-1278">Translocase</keyword>
<keyword id="KW-0812">Transmembrane</keyword>
<keyword id="KW-1133">Transmembrane helix</keyword>
<keyword id="KW-0813">Transport</keyword>